<name>ROCA_BACCZ</name>
<accession>Q63GS0</accession>
<feature type="chain" id="PRO_0000056506" description="1-pyrroline-5-carboxylate dehydrogenase">
    <location>
        <begin position="1"/>
        <end position="515"/>
    </location>
</feature>
<feature type="active site" evidence="1">
    <location>
        <position position="286"/>
    </location>
</feature>
<feature type="active site" evidence="1">
    <location>
        <position position="320"/>
    </location>
</feature>
<keyword id="KW-0520">NAD</keyword>
<keyword id="KW-0560">Oxidoreductase</keyword>
<organism>
    <name type="scientific">Bacillus cereus (strain ZK / E33L)</name>
    <dbReference type="NCBI Taxonomy" id="288681"/>
    <lineage>
        <taxon>Bacteria</taxon>
        <taxon>Bacillati</taxon>
        <taxon>Bacillota</taxon>
        <taxon>Bacilli</taxon>
        <taxon>Bacillales</taxon>
        <taxon>Bacillaceae</taxon>
        <taxon>Bacillus</taxon>
        <taxon>Bacillus cereus group</taxon>
    </lineage>
</organism>
<dbReference type="EC" id="1.2.1.88" evidence="1"/>
<dbReference type="EMBL" id="CP000001">
    <property type="protein sequence ID" value="AAU19958.1"/>
    <property type="molecule type" value="Genomic_DNA"/>
</dbReference>
<dbReference type="SMR" id="Q63GS0"/>
<dbReference type="KEGG" id="bcz:BCE33L0282"/>
<dbReference type="PATRIC" id="fig|288681.22.peg.5327"/>
<dbReference type="UniPathway" id="UPA00261">
    <property type="reaction ID" value="UER00374"/>
</dbReference>
<dbReference type="Proteomes" id="UP000002612">
    <property type="component" value="Chromosome"/>
</dbReference>
<dbReference type="GO" id="GO:0009898">
    <property type="term" value="C:cytoplasmic side of plasma membrane"/>
    <property type="evidence" value="ECO:0007669"/>
    <property type="project" value="TreeGrafter"/>
</dbReference>
<dbReference type="GO" id="GO:0003842">
    <property type="term" value="F:1-pyrroline-5-carboxylate dehydrogenase activity"/>
    <property type="evidence" value="ECO:0007669"/>
    <property type="project" value="UniProtKB-UniRule"/>
</dbReference>
<dbReference type="GO" id="GO:0006537">
    <property type="term" value="P:glutamate biosynthetic process"/>
    <property type="evidence" value="ECO:0007669"/>
    <property type="project" value="UniProtKB-UniRule"/>
</dbReference>
<dbReference type="GO" id="GO:0010133">
    <property type="term" value="P:proline catabolic process to glutamate"/>
    <property type="evidence" value="ECO:0007669"/>
    <property type="project" value="UniProtKB-UniPathway"/>
</dbReference>
<dbReference type="CDD" id="cd07124">
    <property type="entry name" value="ALDH_PutA-P5CDH-RocA"/>
    <property type="match status" value="1"/>
</dbReference>
<dbReference type="FunFam" id="3.40.309.10:FF:000005">
    <property type="entry name" value="1-pyrroline-5-carboxylate dehydrogenase 1"/>
    <property type="match status" value="1"/>
</dbReference>
<dbReference type="FunFam" id="3.40.605.10:FF:000045">
    <property type="entry name" value="1-pyrroline-5-carboxylate dehydrogenase 1"/>
    <property type="match status" value="1"/>
</dbReference>
<dbReference type="Gene3D" id="3.40.605.10">
    <property type="entry name" value="Aldehyde Dehydrogenase, Chain A, domain 1"/>
    <property type="match status" value="1"/>
</dbReference>
<dbReference type="Gene3D" id="3.40.309.10">
    <property type="entry name" value="Aldehyde Dehydrogenase, Chain A, domain 2"/>
    <property type="match status" value="1"/>
</dbReference>
<dbReference type="HAMAP" id="MF_00733">
    <property type="entry name" value="RocA"/>
    <property type="match status" value="1"/>
</dbReference>
<dbReference type="InterPro" id="IPR016161">
    <property type="entry name" value="Ald_DH/histidinol_DH"/>
</dbReference>
<dbReference type="InterPro" id="IPR016163">
    <property type="entry name" value="Ald_DH_C"/>
</dbReference>
<dbReference type="InterPro" id="IPR016160">
    <property type="entry name" value="Ald_DH_CS_CYS"/>
</dbReference>
<dbReference type="InterPro" id="IPR029510">
    <property type="entry name" value="Ald_DH_CS_GLU"/>
</dbReference>
<dbReference type="InterPro" id="IPR016162">
    <property type="entry name" value="Ald_DH_N"/>
</dbReference>
<dbReference type="InterPro" id="IPR015590">
    <property type="entry name" value="Aldehyde_DH_dom"/>
</dbReference>
<dbReference type="InterPro" id="IPR050485">
    <property type="entry name" value="Proline_metab_enzyme"/>
</dbReference>
<dbReference type="InterPro" id="IPR005932">
    <property type="entry name" value="RocA"/>
</dbReference>
<dbReference type="InterPro" id="IPR047597">
    <property type="entry name" value="RocA_bacillales"/>
</dbReference>
<dbReference type="NCBIfam" id="TIGR01237">
    <property type="entry name" value="D1pyr5carbox2"/>
    <property type="match status" value="1"/>
</dbReference>
<dbReference type="NCBIfam" id="NF002852">
    <property type="entry name" value="PRK03137.1"/>
    <property type="match status" value="1"/>
</dbReference>
<dbReference type="PANTHER" id="PTHR42862">
    <property type="entry name" value="DELTA-1-PYRROLINE-5-CARBOXYLATE DEHYDROGENASE 1, ISOFORM A-RELATED"/>
    <property type="match status" value="1"/>
</dbReference>
<dbReference type="PANTHER" id="PTHR42862:SF1">
    <property type="entry name" value="DELTA-1-PYRROLINE-5-CARBOXYLATE DEHYDROGENASE 2, ISOFORM A-RELATED"/>
    <property type="match status" value="1"/>
</dbReference>
<dbReference type="Pfam" id="PF00171">
    <property type="entry name" value="Aldedh"/>
    <property type="match status" value="1"/>
</dbReference>
<dbReference type="SUPFAM" id="SSF53720">
    <property type="entry name" value="ALDH-like"/>
    <property type="match status" value="1"/>
</dbReference>
<dbReference type="PROSITE" id="PS00070">
    <property type="entry name" value="ALDEHYDE_DEHYDR_CYS"/>
    <property type="match status" value="1"/>
</dbReference>
<dbReference type="PROSITE" id="PS00687">
    <property type="entry name" value="ALDEHYDE_DEHYDR_GLU"/>
    <property type="match status" value="1"/>
</dbReference>
<sequence>MVVAYKHEPFTDFSVEANKLAFEEGLKKVESYLGQDYPLIIGGEKITTEDKIVSVNPANKEELVGRVSKASRELAEKAMQVADETFQTWRKSKPEMRADILFRAAAIVRRRKHEFSAILVKEAGKPWNEADADTAEAIDFMEYYGRQMLKLKDGIPVESRPIEYNRFSYIPLGVGVIISPWNFPFAIMAGMTTAALVSGNTVLLKPASTTPVVAAKFMEVLEEAGLPAGVVNFVPGNGSEVGDYLVDHPRTRFISFTGSRDVGIRIYERAAKVNPGQIWLKRVIAEMGGKDTIVVDKEADLELAAKSIVASAFGFSGQKCSACSRAVIHEDVYDHVLNRAVELTKELTVANPAVLGTNMGPVNDQAAFDKVMSYVAIGKEEGRILAGGEGDDSKGWFIQPTIVADVAEDARLMKEEIFGPVVAFCKAKDFDHALAIANNTEYGLTGAVISNNRDHIEKAREDFHVGNLYFNRGCTGAIVGYQPFGGFNMSGTDSKAGGPDYLALHMQAKTTSETL</sequence>
<comment type="catalytic activity">
    <reaction evidence="1">
        <text>L-glutamate 5-semialdehyde + NAD(+) + H2O = L-glutamate + NADH + 2 H(+)</text>
        <dbReference type="Rhea" id="RHEA:30235"/>
        <dbReference type="ChEBI" id="CHEBI:15377"/>
        <dbReference type="ChEBI" id="CHEBI:15378"/>
        <dbReference type="ChEBI" id="CHEBI:29985"/>
        <dbReference type="ChEBI" id="CHEBI:57540"/>
        <dbReference type="ChEBI" id="CHEBI:57945"/>
        <dbReference type="ChEBI" id="CHEBI:58066"/>
        <dbReference type="EC" id="1.2.1.88"/>
    </reaction>
</comment>
<comment type="pathway">
    <text evidence="1">Amino-acid degradation; L-proline degradation into L-glutamate; L-glutamate from L-proline: step 2/2.</text>
</comment>
<comment type="similarity">
    <text evidence="1">Belongs to the aldehyde dehydrogenase family. RocA subfamily.</text>
</comment>
<proteinExistence type="inferred from homology"/>
<evidence type="ECO:0000255" key="1">
    <source>
        <dbReference type="HAMAP-Rule" id="MF_00733"/>
    </source>
</evidence>
<gene>
    <name evidence="1" type="primary">rocA</name>
    <name type="ordered locus">BCE33L0282</name>
</gene>
<protein>
    <recommendedName>
        <fullName evidence="1">1-pyrroline-5-carboxylate dehydrogenase</fullName>
        <shortName evidence="1">P5C dehydrogenase</shortName>
        <ecNumber evidence="1">1.2.1.88</ecNumber>
    </recommendedName>
    <alternativeName>
        <fullName evidence="1">L-glutamate gamma-semialdehyde dehydrogenase</fullName>
    </alternativeName>
</protein>
<reference key="1">
    <citation type="journal article" date="2006" name="J. Bacteriol.">
        <title>Pathogenomic sequence analysis of Bacillus cereus and Bacillus thuringiensis isolates closely related to Bacillus anthracis.</title>
        <authorList>
            <person name="Han C.S."/>
            <person name="Xie G."/>
            <person name="Challacombe J.F."/>
            <person name="Altherr M.R."/>
            <person name="Bhotika S.S."/>
            <person name="Bruce D."/>
            <person name="Campbell C.S."/>
            <person name="Campbell M.L."/>
            <person name="Chen J."/>
            <person name="Chertkov O."/>
            <person name="Cleland C."/>
            <person name="Dimitrijevic M."/>
            <person name="Doggett N.A."/>
            <person name="Fawcett J.J."/>
            <person name="Glavina T."/>
            <person name="Goodwin L.A."/>
            <person name="Hill K.K."/>
            <person name="Hitchcock P."/>
            <person name="Jackson P.J."/>
            <person name="Keim P."/>
            <person name="Kewalramani A.R."/>
            <person name="Longmire J."/>
            <person name="Lucas S."/>
            <person name="Malfatti S."/>
            <person name="McMurry K."/>
            <person name="Meincke L.J."/>
            <person name="Misra M."/>
            <person name="Moseman B.L."/>
            <person name="Mundt M."/>
            <person name="Munk A.C."/>
            <person name="Okinaka R.T."/>
            <person name="Parson-Quintana B."/>
            <person name="Reilly L.P."/>
            <person name="Richardson P."/>
            <person name="Robinson D.L."/>
            <person name="Rubin E."/>
            <person name="Saunders E."/>
            <person name="Tapia R."/>
            <person name="Tesmer J.G."/>
            <person name="Thayer N."/>
            <person name="Thompson L.S."/>
            <person name="Tice H."/>
            <person name="Ticknor L.O."/>
            <person name="Wills P.L."/>
            <person name="Brettin T.S."/>
            <person name="Gilna P."/>
        </authorList>
    </citation>
    <scope>NUCLEOTIDE SEQUENCE [LARGE SCALE GENOMIC DNA]</scope>
    <source>
        <strain>ZK / E33L</strain>
    </source>
</reference>